<reference key="1">
    <citation type="journal article" date="1997" name="Nature">
        <title>The complete genome sequence of the Gram-positive bacterium Bacillus subtilis.</title>
        <authorList>
            <person name="Kunst F."/>
            <person name="Ogasawara N."/>
            <person name="Moszer I."/>
            <person name="Albertini A.M."/>
            <person name="Alloni G."/>
            <person name="Azevedo V."/>
            <person name="Bertero M.G."/>
            <person name="Bessieres P."/>
            <person name="Bolotin A."/>
            <person name="Borchert S."/>
            <person name="Borriss R."/>
            <person name="Boursier L."/>
            <person name="Brans A."/>
            <person name="Braun M."/>
            <person name="Brignell S.C."/>
            <person name="Bron S."/>
            <person name="Brouillet S."/>
            <person name="Bruschi C.V."/>
            <person name="Caldwell B."/>
            <person name="Capuano V."/>
            <person name="Carter N.M."/>
            <person name="Choi S.-K."/>
            <person name="Codani J.-J."/>
            <person name="Connerton I.F."/>
            <person name="Cummings N.J."/>
            <person name="Daniel R.A."/>
            <person name="Denizot F."/>
            <person name="Devine K.M."/>
            <person name="Duesterhoeft A."/>
            <person name="Ehrlich S.D."/>
            <person name="Emmerson P.T."/>
            <person name="Entian K.-D."/>
            <person name="Errington J."/>
            <person name="Fabret C."/>
            <person name="Ferrari E."/>
            <person name="Foulger D."/>
            <person name="Fritz C."/>
            <person name="Fujita M."/>
            <person name="Fujita Y."/>
            <person name="Fuma S."/>
            <person name="Galizzi A."/>
            <person name="Galleron N."/>
            <person name="Ghim S.-Y."/>
            <person name="Glaser P."/>
            <person name="Goffeau A."/>
            <person name="Golightly E.J."/>
            <person name="Grandi G."/>
            <person name="Guiseppi G."/>
            <person name="Guy B.J."/>
            <person name="Haga K."/>
            <person name="Haiech J."/>
            <person name="Harwood C.R."/>
            <person name="Henaut A."/>
            <person name="Hilbert H."/>
            <person name="Holsappel S."/>
            <person name="Hosono S."/>
            <person name="Hullo M.-F."/>
            <person name="Itaya M."/>
            <person name="Jones L.-M."/>
            <person name="Joris B."/>
            <person name="Karamata D."/>
            <person name="Kasahara Y."/>
            <person name="Klaerr-Blanchard M."/>
            <person name="Klein C."/>
            <person name="Kobayashi Y."/>
            <person name="Koetter P."/>
            <person name="Koningstein G."/>
            <person name="Krogh S."/>
            <person name="Kumano M."/>
            <person name="Kurita K."/>
            <person name="Lapidus A."/>
            <person name="Lardinois S."/>
            <person name="Lauber J."/>
            <person name="Lazarevic V."/>
            <person name="Lee S.-M."/>
            <person name="Levine A."/>
            <person name="Liu H."/>
            <person name="Masuda S."/>
            <person name="Mauel C."/>
            <person name="Medigue C."/>
            <person name="Medina N."/>
            <person name="Mellado R.P."/>
            <person name="Mizuno M."/>
            <person name="Moestl D."/>
            <person name="Nakai S."/>
            <person name="Noback M."/>
            <person name="Noone D."/>
            <person name="O'Reilly M."/>
            <person name="Ogawa K."/>
            <person name="Ogiwara A."/>
            <person name="Oudega B."/>
            <person name="Park S.-H."/>
            <person name="Parro V."/>
            <person name="Pohl T.M."/>
            <person name="Portetelle D."/>
            <person name="Porwollik S."/>
            <person name="Prescott A.M."/>
            <person name="Presecan E."/>
            <person name="Pujic P."/>
            <person name="Purnelle B."/>
            <person name="Rapoport G."/>
            <person name="Rey M."/>
            <person name="Reynolds S."/>
            <person name="Rieger M."/>
            <person name="Rivolta C."/>
            <person name="Rocha E."/>
            <person name="Roche B."/>
            <person name="Rose M."/>
            <person name="Sadaie Y."/>
            <person name="Sato T."/>
            <person name="Scanlan E."/>
            <person name="Schleich S."/>
            <person name="Schroeter R."/>
            <person name="Scoffone F."/>
            <person name="Sekiguchi J."/>
            <person name="Sekowska A."/>
            <person name="Seror S.J."/>
            <person name="Serror P."/>
            <person name="Shin B.-S."/>
            <person name="Soldo B."/>
            <person name="Sorokin A."/>
            <person name="Tacconi E."/>
            <person name="Takagi T."/>
            <person name="Takahashi H."/>
            <person name="Takemaru K."/>
            <person name="Takeuchi M."/>
            <person name="Tamakoshi A."/>
            <person name="Tanaka T."/>
            <person name="Terpstra P."/>
            <person name="Tognoni A."/>
            <person name="Tosato V."/>
            <person name="Uchiyama S."/>
            <person name="Vandenbol M."/>
            <person name="Vannier F."/>
            <person name="Vassarotti A."/>
            <person name="Viari A."/>
            <person name="Wambutt R."/>
            <person name="Wedler E."/>
            <person name="Wedler H."/>
            <person name="Weitzenegger T."/>
            <person name="Winters P."/>
            <person name="Wipat A."/>
            <person name="Yamamoto H."/>
            <person name="Yamane K."/>
            <person name="Yasumoto K."/>
            <person name="Yata K."/>
            <person name="Yoshida K."/>
            <person name="Yoshikawa H.-F."/>
            <person name="Zumstein E."/>
            <person name="Yoshikawa H."/>
            <person name="Danchin A."/>
        </authorList>
    </citation>
    <scope>NUCLEOTIDE SEQUENCE [LARGE SCALE GENOMIC DNA]</scope>
    <source>
        <strain>168</strain>
    </source>
</reference>
<reference key="2">
    <citation type="journal article" date="2007" name="Mol. Microbiol.">
        <title>A fail-safe system for the ribosome under zinc-limiting conditions in Bacillus subtilis.</title>
        <authorList>
            <person name="Natori Y."/>
            <person name="Nanamiya H."/>
            <person name="Akanuma G."/>
            <person name="Kosono S."/>
            <person name="Kudo T."/>
            <person name="Ochi K."/>
            <person name="Kawamura F."/>
        </authorList>
    </citation>
    <scope>FUNCTION</scope>
    <scope>IDENTIFICATION IN RIBOSOME COMPLEX</scope>
    <scope>INDUCTION</scope>
    <source>
        <strain>168</strain>
    </source>
</reference>
<feature type="chain" id="PRO_0000130873" description="Small ribosomal subunit protein uS14A">
    <location>
        <begin position="1"/>
        <end position="89"/>
    </location>
</feature>
<evidence type="ECO:0000250" key="1"/>
<evidence type="ECO:0000255" key="2">
    <source>
        <dbReference type="HAMAP-Rule" id="MF_00537"/>
    </source>
</evidence>
<evidence type="ECO:0000269" key="3">
    <source>
    </source>
</evidence>
<evidence type="ECO:0000303" key="4">
    <source>
    </source>
</evidence>
<protein>
    <recommendedName>
        <fullName evidence="2">Small ribosomal subunit protein uS14A</fullName>
    </recommendedName>
    <alternativeName>
        <fullName evidence="4">Alternate 30S ribosomal protein S14</fullName>
    </alternativeName>
</protein>
<organism>
    <name type="scientific">Bacillus subtilis (strain 168)</name>
    <dbReference type="NCBI Taxonomy" id="224308"/>
    <lineage>
        <taxon>Bacteria</taxon>
        <taxon>Bacillati</taxon>
        <taxon>Bacillota</taxon>
        <taxon>Bacilli</taxon>
        <taxon>Bacillales</taxon>
        <taxon>Bacillaceae</taxon>
        <taxon>Bacillus</taxon>
    </lineage>
</organism>
<dbReference type="EMBL" id="AL009126">
    <property type="protein sequence ID" value="CAB12716.1"/>
    <property type="molecule type" value="Genomic_DNA"/>
</dbReference>
<dbReference type="PIR" id="F69835">
    <property type="entry name" value="F69835"/>
</dbReference>
<dbReference type="RefSeq" id="NP_388768.1">
    <property type="nucleotide sequence ID" value="NC_000964.3"/>
</dbReference>
<dbReference type="SMR" id="O31587"/>
<dbReference type="FunCoup" id="O31587">
    <property type="interactions" value="485"/>
</dbReference>
<dbReference type="STRING" id="224308.BSU08880"/>
<dbReference type="PaxDb" id="224308-BSU08880"/>
<dbReference type="EnsemblBacteria" id="CAB12716">
    <property type="protein sequence ID" value="CAB12716"/>
    <property type="gene ID" value="BSU_08880"/>
</dbReference>
<dbReference type="GeneID" id="936213"/>
<dbReference type="KEGG" id="bsu:BSU08880"/>
<dbReference type="PATRIC" id="fig|224308.179.peg.958"/>
<dbReference type="eggNOG" id="COG0199">
    <property type="taxonomic scope" value="Bacteria"/>
</dbReference>
<dbReference type="InParanoid" id="O31587"/>
<dbReference type="OrthoDB" id="9810484at2"/>
<dbReference type="PhylomeDB" id="O31587"/>
<dbReference type="BioCyc" id="BSUB:BSU08880-MONOMER"/>
<dbReference type="Proteomes" id="UP000001570">
    <property type="component" value="Chromosome"/>
</dbReference>
<dbReference type="GO" id="GO:0005737">
    <property type="term" value="C:cytoplasm"/>
    <property type="evidence" value="ECO:0007669"/>
    <property type="project" value="UniProtKB-ARBA"/>
</dbReference>
<dbReference type="GO" id="GO:0015935">
    <property type="term" value="C:small ribosomal subunit"/>
    <property type="evidence" value="ECO:0000318"/>
    <property type="project" value="GO_Central"/>
</dbReference>
<dbReference type="GO" id="GO:0019843">
    <property type="term" value="F:rRNA binding"/>
    <property type="evidence" value="ECO:0007669"/>
    <property type="project" value="UniProtKB-UniRule"/>
</dbReference>
<dbReference type="GO" id="GO:0003735">
    <property type="term" value="F:structural constituent of ribosome"/>
    <property type="evidence" value="ECO:0000318"/>
    <property type="project" value="GO_Central"/>
</dbReference>
<dbReference type="GO" id="GO:0006412">
    <property type="term" value="P:translation"/>
    <property type="evidence" value="ECO:0000318"/>
    <property type="project" value="GO_Central"/>
</dbReference>
<dbReference type="FunFam" id="4.10.830.10:FF:000003">
    <property type="entry name" value="30S ribosomal protein S14"/>
    <property type="match status" value="1"/>
</dbReference>
<dbReference type="Gene3D" id="4.10.830.10">
    <property type="entry name" value="30s Ribosomal Protein S14, Chain N"/>
    <property type="match status" value="1"/>
</dbReference>
<dbReference type="HAMAP" id="MF_00537">
    <property type="entry name" value="Ribosomal_uS14_1"/>
    <property type="match status" value="1"/>
</dbReference>
<dbReference type="InterPro" id="IPR001209">
    <property type="entry name" value="Ribosomal_uS14"/>
</dbReference>
<dbReference type="InterPro" id="IPR023036">
    <property type="entry name" value="Ribosomal_uS14_bac/plastid"/>
</dbReference>
<dbReference type="InterPro" id="IPR018271">
    <property type="entry name" value="Ribosomal_uS14_CS"/>
</dbReference>
<dbReference type="InterPro" id="IPR043140">
    <property type="entry name" value="Ribosomal_uS14_sf"/>
</dbReference>
<dbReference type="NCBIfam" id="NF006477">
    <property type="entry name" value="PRK08881.1"/>
    <property type="match status" value="1"/>
</dbReference>
<dbReference type="PANTHER" id="PTHR19836">
    <property type="entry name" value="30S RIBOSOMAL PROTEIN S14"/>
    <property type="match status" value="1"/>
</dbReference>
<dbReference type="PANTHER" id="PTHR19836:SF19">
    <property type="entry name" value="SMALL RIBOSOMAL SUBUNIT PROTEIN US14M"/>
    <property type="match status" value="1"/>
</dbReference>
<dbReference type="Pfam" id="PF00253">
    <property type="entry name" value="Ribosomal_S14"/>
    <property type="match status" value="1"/>
</dbReference>
<dbReference type="SUPFAM" id="SSF57716">
    <property type="entry name" value="Glucocorticoid receptor-like (DNA-binding domain)"/>
    <property type="match status" value="1"/>
</dbReference>
<dbReference type="PROSITE" id="PS00527">
    <property type="entry name" value="RIBOSOMAL_S14"/>
    <property type="match status" value="1"/>
</dbReference>
<accession>O31587</accession>
<comment type="function">
    <text evidence="2">Binds 16S rRNA, required for the assembly of 30S particles and may also be responsible for determining the conformation of the 16S rRNA at the A site.</text>
</comment>
<comment type="function">
    <text>Non-essential protein. A second form of uS14, it can integrate into the 30S subunit where it partially compensates for loss of the major uS14 protein (AC P12878) in restoring 70S formation, although it does not seem to be incorporated into the ribosome as well as the major uS14.</text>
</comment>
<comment type="subunit">
    <text evidence="1 3">Contacts proteins S3 and S10 (By similarity). Part of the 30S ribosomal subunit.</text>
</comment>
<comment type="induction">
    <text evidence="3">Repressed by the zinc-specific metallo-regulatory protein zur.</text>
</comment>
<comment type="similarity">
    <text evidence="2">Belongs to the universal ribosomal protein uS14 family.</text>
</comment>
<keyword id="KW-1185">Reference proteome</keyword>
<keyword id="KW-0687">Ribonucleoprotein</keyword>
<keyword id="KW-0689">Ribosomal protein</keyword>
<keyword id="KW-0694">RNA-binding</keyword>
<keyword id="KW-0699">rRNA-binding</keyword>
<gene>
    <name evidence="2" type="primary">rpsN2</name>
    <name type="synonym">rpsNB</name>
    <name evidence="4" type="synonym">yhzA</name>
    <name type="ordered locus">BSU08880</name>
</gene>
<proteinExistence type="evidence at protein level"/>
<name>RS14_BACSU</name>
<sequence length="89" mass="10341">MAKKSKVAKELKRQQLVEQYAGIRRELKEKGDYEALSKLPRDSAPGRLHNRCMVTGRPRAYMRKFKMSRIAFRELAHKGQIPGVKKASW</sequence>